<keyword id="KW-0040">ANK repeat</keyword>
<keyword id="KW-0131">Cell cycle</keyword>
<keyword id="KW-0963">Cytoplasm</keyword>
<keyword id="KW-0256">Endoplasmic reticulum</keyword>
<keyword id="KW-0333">Golgi apparatus</keyword>
<keyword id="KW-0472">Membrane</keyword>
<keyword id="KW-1185">Reference proteome</keyword>
<keyword id="KW-0677">Repeat</keyword>
<keyword id="KW-0808">Transferase</keyword>
<keyword id="KW-0833">Ubl conjugation pathway</keyword>
<evidence type="ECO:0000250" key="1">
    <source>
        <dbReference type="UniProtKB" id="Q8IYU2"/>
    </source>
</evidence>
<evidence type="ECO:0000255" key="2">
    <source>
        <dbReference type="PROSITE-ProRule" id="PRU00104"/>
    </source>
</evidence>
<feature type="chain" id="PRO_0000280624" description="E3 ubiquitin-protein ligase HACE1">
    <location>
        <begin position="1"/>
        <end position="944"/>
    </location>
</feature>
<feature type="repeat" description="ANK 1" evidence="1">
    <location>
        <begin position="23"/>
        <end position="55"/>
    </location>
</feature>
<feature type="repeat" description="ANK 2" evidence="1">
    <location>
        <begin position="64"/>
        <end position="93"/>
    </location>
</feature>
<feature type="repeat" description="ANK 3" evidence="1">
    <location>
        <begin position="97"/>
        <end position="126"/>
    </location>
</feature>
<feature type="repeat" description="ANK 4" evidence="1">
    <location>
        <begin position="130"/>
        <end position="159"/>
    </location>
</feature>
<feature type="repeat" description="ANK 5" evidence="1">
    <location>
        <begin position="163"/>
        <end position="192"/>
    </location>
</feature>
<feature type="repeat" description="ANK 6" evidence="1">
    <location>
        <begin position="196"/>
        <end position="226"/>
    </location>
</feature>
<feature type="repeat" description="ANK 7" evidence="1">
    <location>
        <begin position="228"/>
        <end position="253"/>
    </location>
</feature>
<feature type="domain" description="HECT" evidence="2">
    <location>
        <begin position="609"/>
        <end position="944"/>
    </location>
</feature>
<feature type="active site" description="Glycyl thioester intermediate" evidence="2">
    <location>
        <position position="911"/>
    </location>
</feature>
<reference key="1">
    <citation type="submission" date="2004-07" db="EMBL/GenBank/DDBJ databases">
        <authorList>
            <consortium name="NIH - Xenopus Gene Collection (XGC) project"/>
        </authorList>
    </citation>
    <scope>NUCLEOTIDE SEQUENCE [LARGE SCALE MRNA]</scope>
    <source>
        <tissue>Embryo</tissue>
    </source>
</reference>
<comment type="function">
    <text evidence="1">E3 ubiquitin-protein ligase involved in Golgi membrane fusion and regulation of small GTPases. Acts as a regulator of Golgi membrane dynamics during the cell cycle: recruited to Golgi membrane by Rab proteins and regulates postmitotic Golgi membrane fusion. Acts by mediating ubiquitination during mitotic Golgi disassembly, ubiquitination serving as a signal for Golgi reassembly later, after cell division.</text>
</comment>
<comment type="catalytic activity">
    <reaction evidence="1">
        <text>S-ubiquitinyl-[E2 ubiquitin-conjugating enzyme]-L-cysteine + [acceptor protein]-L-lysine = [E2 ubiquitin-conjugating enzyme]-L-cysteine + N(6)-ubiquitinyl-[acceptor protein]-L-lysine.</text>
        <dbReference type="EC" id="2.3.2.26"/>
    </reaction>
</comment>
<comment type="pathway">
    <text evidence="1">Protein modification; protein ubiquitination.</text>
</comment>
<comment type="subcellular location">
    <subcellularLocation>
        <location evidence="1">Golgi apparatus</location>
        <location evidence="1">Golgi stack membrane</location>
    </subcellularLocation>
    <subcellularLocation>
        <location evidence="1">Cytoplasm</location>
    </subcellularLocation>
    <subcellularLocation>
        <location evidence="1">Endoplasmic reticulum</location>
    </subcellularLocation>
</comment>
<sequence length="944" mass="106585">MERAMEQLNRLTRSLRRARTVELPEDNETAVYTLMPMVMADQHRSVLELLSNSKFDVNYAFGRVKRSLLHIAANCGSVECLVLLLKRGADPNYQDISGCTPLHLAARNGQKKCMSKLLEYNADVNICNNEGLTAIHWLAVNGRTELLHDLVQHVTNVDVEDAMGQTALHVACQNGHKTTVLCLLDSGADINRPNVSGATPLYFACSHGQRDTAQILLLRGAKYLPDKNGVTPLDLCVQGGYGETCDILIQHHPRLFQTLIQMTQNEELRENMLRQVLEHLSQQSEVQYLKILTGLAEVATTNGHKLLSISSSYEAQMKSLLRIVRIFCHVFRIGPSSPNNGNDMGYNGNKTPRNQVFKVRNVSDVFRKINIKEMNLPKHTLIYQATSEQDPLELLWHSLDEWLVLIATELTKNKRDSSNIACILLKQSPLDQQDISLAHQSAIGESGNHDHLLASTRAGDLESCSAIGIQEPVADGQDVISMTANRLSAVIQAFYMCCSCQMPQGMTSPRFIEFVCKHDEVLKCFVTRNPKIIFDHFHFLLECPELMSRFMHIIKAQPFKERCEWFYEHLLAGQPDTDMVHRPVNENDILLVHRDSIFRSSCEVVFKSNCEKLKQGIAVRFHGEEGMGQGVVREWFDILSSEMINPDYALFTQSADGTTFQPNSNSSVNPDHLNYFRFAGEILGLALYHRQLVNIYFTRSFYKHILGIPVNYQDVASIDPEYAKNLQWILDNDISDLGLELTFSVETDVFGAMEEVPLKPGGASILVTQENKAEYVQLVTELRMTRAIQPQINGFLQGFHMFIPPSLIQLFDEYELELLLSGMPEIDVNDWMKNTEYTSGYERDDQVIQWFWEVVQELTQEERVLLLQFVTGSSRVPHGGFAYIMGGSGLQNFTIAAVAYTANLLPTSSTCINMLKLPEYPSKEILKDRLLVALHCGSYGYTMA</sequence>
<protein>
    <recommendedName>
        <fullName>E3 ubiquitin-protein ligase HACE1</fullName>
        <ecNumber evidence="1">2.3.2.26</ecNumber>
    </recommendedName>
    <alternativeName>
        <fullName>HECT domain and ankyrin repeat-containing E3 ubiquitin-protein ligase 1</fullName>
    </alternativeName>
    <alternativeName>
        <fullName evidence="1">HECT-type E3 ubiquitin transferase HACE1</fullName>
    </alternativeName>
</protein>
<organism>
    <name type="scientific">Xenopus laevis</name>
    <name type="common">African clawed frog</name>
    <dbReference type="NCBI Taxonomy" id="8355"/>
    <lineage>
        <taxon>Eukaryota</taxon>
        <taxon>Metazoa</taxon>
        <taxon>Chordata</taxon>
        <taxon>Craniata</taxon>
        <taxon>Vertebrata</taxon>
        <taxon>Euteleostomi</taxon>
        <taxon>Amphibia</taxon>
        <taxon>Batrachia</taxon>
        <taxon>Anura</taxon>
        <taxon>Pipoidea</taxon>
        <taxon>Pipidae</taxon>
        <taxon>Xenopodinae</taxon>
        <taxon>Xenopus</taxon>
        <taxon>Xenopus</taxon>
    </lineage>
</organism>
<proteinExistence type="evidence at transcript level"/>
<name>HACE1_XENLA</name>
<accession>Q6DCL5</accession>
<dbReference type="EC" id="2.3.2.26" evidence="1"/>
<dbReference type="EMBL" id="BC077993">
    <property type="protein sequence ID" value="AAH77993.1"/>
    <property type="molecule type" value="mRNA"/>
</dbReference>
<dbReference type="RefSeq" id="NP_001087077.1">
    <property type="nucleotide sequence ID" value="NM_001093608.1"/>
</dbReference>
<dbReference type="SMR" id="Q6DCL5"/>
<dbReference type="DNASU" id="446912"/>
<dbReference type="GeneID" id="446912"/>
<dbReference type="KEGG" id="xla:446912"/>
<dbReference type="AGR" id="Xenbase:XB-GENE-5757545"/>
<dbReference type="CTD" id="446912"/>
<dbReference type="Xenbase" id="XB-GENE-5757545">
    <property type="gene designation" value="hace1.L"/>
</dbReference>
<dbReference type="OMA" id="QDHQDAT"/>
<dbReference type="OrthoDB" id="8068875at2759"/>
<dbReference type="UniPathway" id="UPA00143"/>
<dbReference type="Proteomes" id="UP000186698">
    <property type="component" value="Chromosome 5L"/>
</dbReference>
<dbReference type="Bgee" id="446912">
    <property type="expression patterns" value="Expressed in egg cell and 19 other cell types or tissues"/>
</dbReference>
<dbReference type="GO" id="GO:0005737">
    <property type="term" value="C:cytoplasm"/>
    <property type="evidence" value="ECO:0000318"/>
    <property type="project" value="GO_Central"/>
</dbReference>
<dbReference type="GO" id="GO:0005783">
    <property type="term" value="C:endoplasmic reticulum"/>
    <property type="evidence" value="ECO:0007669"/>
    <property type="project" value="UniProtKB-SubCell"/>
</dbReference>
<dbReference type="GO" id="GO:0032580">
    <property type="term" value="C:Golgi cisterna membrane"/>
    <property type="evidence" value="ECO:0007669"/>
    <property type="project" value="UniProtKB-SubCell"/>
</dbReference>
<dbReference type="GO" id="GO:0000139">
    <property type="term" value="C:Golgi membrane"/>
    <property type="evidence" value="ECO:0000250"/>
    <property type="project" value="UniProtKB"/>
</dbReference>
<dbReference type="GO" id="GO:0005634">
    <property type="term" value="C:nucleus"/>
    <property type="evidence" value="ECO:0000318"/>
    <property type="project" value="GO_Central"/>
</dbReference>
<dbReference type="GO" id="GO:0031267">
    <property type="term" value="F:small GTPase binding"/>
    <property type="evidence" value="ECO:0000250"/>
    <property type="project" value="UniProtKB"/>
</dbReference>
<dbReference type="GO" id="GO:0061630">
    <property type="term" value="F:ubiquitin protein ligase activity"/>
    <property type="evidence" value="ECO:0000318"/>
    <property type="project" value="GO_Central"/>
</dbReference>
<dbReference type="GO" id="GO:0004842">
    <property type="term" value="F:ubiquitin-protein transferase activity"/>
    <property type="evidence" value="ECO:0000250"/>
    <property type="project" value="UniProtKB"/>
</dbReference>
<dbReference type="GO" id="GO:0007030">
    <property type="term" value="P:Golgi organization"/>
    <property type="evidence" value="ECO:0000250"/>
    <property type="project" value="UniProtKB"/>
</dbReference>
<dbReference type="GO" id="GO:0061025">
    <property type="term" value="P:membrane fusion"/>
    <property type="evidence" value="ECO:0000250"/>
    <property type="project" value="UniProtKB"/>
</dbReference>
<dbReference type="GO" id="GO:0070936">
    <property type="term" value="P:protein K48-linked ubiquitination"/>
    <property type="evidence" value="ECO:0000250"/>
    <property type="project" value="UniProtKB"/>
</dbReference>
<dbReference type="GO" id="GO:0016567">
    <property type="term" value="P:protein ubiquitination"/>
    <property type="evidence" value="ECO:0000250"/>
    <property type="project" value="UniProtKB"/>
</dbReference>
<dbReference type="GO" id="GO:0030334">
    <property type="term" value="P:regulation of cell migration"/>
    <property type="evidence" value="ECO:0000250"/>
    <property type="project" value="UniProtKB"/>
</dbReference>
<dbReference type="GO" id="GO:0006511">
    <property type="term" value="P:ubiquitin-dependent protein catabolic process"/>
    <property type="evidence" value="ECO:0000250"/>
    <property type="project" value="UniProtKB"/>
</dbReference>
<dbReference type="CDD" id="cd00078">
    <property type="entry name" value="HECTc"/>
    <property type="match status" value="1"/>
</dbReference>
<dbReference type="FunFam" id="3.90.1750.10:FF:000026">
    <property type="entry name" value="E3 ubiquitin-protein ligase HACE1"/>
    <property type="match status" value="1"/>
</dbReference>
<dbReference type="FunFam" id="1.25.40.20:FF:000051">
    <property type="entry name" value="E3 ubiquitin-protein ligase HACE1 isoform X1"/>
    <property type="match status" value="1"/>
</dbReference>
<dbReference type="FunFam" id="3.30.2410.10:FF:000016">
    <property type="entry name" value="E3 ubiquitin-protein ligase HACE1 isoform X1"/>
    <property type="match status" value="1"/>
</dbReference>
<dbReference type="FunFam" id="3.30.2160.10:FF:000001">
    <property type="entry name" value="E3 ubiquitin-protein ligase NEDD4-like"/>
    <property type="match status" value="1"/>
</dbReference>
<dbReference type="FunFam" id="1.25.40.20:FF:000256">
    <property type="entry name" value="HECT domain and ankyrin repeat containing E3 ubiquitin protein ligase 1"/>
    <property type="match status" value="1"/>
</dbReference>
<dbReference type="Gene3D" id="1.25.40.20">
    <property type="entry name" value="Ankyrin repeat-containing domain"/>
    <property type="match status" value="2"/>
</dbReference>
<dbReference type="Gene3D" id="3.30.2160.10">
    <property type="entry name" value="Hect, E3 ligase catalytic domain"/>
    <property type="match status" value="1"/>
</dbReference>
<dbReference type="Gene3D" id="3.30.2410.10">
    <property type="entry name" value="Hect, E3 ligase catalytic domain"/>
    <property type="match status" value="1"/>
</dbReference>
<dbReference type="Gene3D" id="3.90.1750.10">
    <property type="entry name" value="Hect, E3 ligase catalytic domains"/>
    <property type="match status" value="1"/>
</dbReference>
<dbReference type="InterPro" id="IPR002110">
    <property type="entry name" value="Ankyrin_rpt"/>
</dbReference>
<dbReference type="InterPro" id="IPR036770">
    <property type="entry name" value="Ankyrin_rpt-contain_sf"/>
</dbReference>
<dbReference type="InterPro" id="IPR050409">
    <property type="entry name" value="E3_ubiq-protein_ligase"/>
</dbReference>
<dbReference type="InterPro" id="IPR000569">
    <property type="entry name" value="HECT_dom"/>
</dbReference>
<dbReference type="InterPro" id="IPR035983">
    <property type="entry name" value="Hect_E3_ubiquitin_ligase"/>
</dbReference>
<dbReference type="PANTHER" id="PTHR11254:SF363">
    <property type="entry name" value="E3 UBIQUITIN-PROTEIN LIGASE HACE1"/>
    <property type="match status" value="1"/>
</dbReference>
<dbReference type="PANTHER" id="PTHR11254">
    <property type="entry name" value="HECT DOMAIN UBIQUITIN-PROTEIN LIGASE"/>
    <property type="match status" value="1"/>
</dbReference>
<dbReference type="Pfam" id="PF12796">
    <property type="entry name" value="Ank_2"/>
    <property type="match status" value="1"/>
</dbReference>
<dbReference type="Pfam" id="PF13637">
    <property type="entry name" value="Ank_4"/>
    <property type="match status" value="1"/>
</dbReference>
<dbReference type="Pfam" id="PF00632">
    <property type="entry name" value="HECT"/>
    <property type="match status" value="1"/>
</dbReference>
<dbReference type="PRINTS" id="PR01415">
    <property type="entry name" value="ANKYRIN"/>
</dbReference>
<dbReference type="SMART" id="SM00248">
    <property type="entry name" value="ANK"/>
    <property type="match status" value="6"/>
</dbReference>
<dbReference type="SMART" id="SM00119">
    <property type="entry name" value="HECTc"/>
    <property type="match status" value="1"/>
</dbReference>
<dbReference type="SUPFAM" id="SSF48403">
    <property type="entry name" value="Ankyrin repeat"/>
    <property type="match status" value="1"/>
</dbReference>
<dbReference type="SUPFAM" id="SSF56204">
    <property type="entry name" value="Hect, E3 ligase catalytic domain"/>
    <property type="match status" value="1"/>
</dbReference>
<dbReference type="PROSITE" id="PS50297">
    <property type="entry name" value="ANK_REP_REGION"/>
    <property type="match status" value="1"/>
</dbReference>
<dbReference type="PROSITE" id="PS50088">
    <property type="entry name" value="ANK_REPEAT"/>
    <property type="match status" value="5"/>
</dbReference>
<dbReference type="PROSITE" id="PS50237">
    <property type="entry name" value="HECT"/>
    <property type="match status" value="1"/>
</dbReference>
<gene>
    <name type="primary">hace1</name>
</gene>